<sequence length="107" mass="11432">MGNLMSLVLVALLFSLSLAVIADTSNDATHVKEEVKPSTEATDAIEAEVEVNDAVVEPQQGLPGGGCRFGCCGGYWWNGLCIYCCRSQAEANEVVKTVEPQKEEAKP</sequence>
<dbReference type="EMBL" id="AF076979">
    <property type="protein sequence ID" value="AAC27640.1"/>
    <property type="molecule type" value="Genomic_DNA"/>
</dbReference>
<dbReference type="EMBL" id="AC005662">
    <property type="protein sequence ID" value="AAC78544.1"/>
    <property type="molecule type" value="Genomic_DNA"/>
</dbReference>
<dbReference type="EMBL" id="CP002685">
    <property type="protein sequence ID" value="AEC09956.1"/>
    <property type="molecule type" value="Genomic_DNA"/>
</dbReference>
<dbReference type="EMBL" id="AK117946">
    <property type="protein sequence ID" value="BAC42584.1"/>
    <property type="molecule type" value="mRNA"/>
</dbReference>
<dbReference type="EMBL" id="BT004695">
    <property type="protein sequence ID" value="AAO42941.1"/>
    <property type="molecule type" value="mRNA"/>
</dbReference>
<dbReference type="PIR" id="H84839">
    <property type="entry name" value="H84839"/>
</dbReference>
<dbReference type="RefSeq" id="NP_181660.1">
    <property type="nucleotide sequence ID" value="NM_129692.2"/>
</dbReference>
<dbReference type="IntAct" id="O81483">
    <property type="interactions" value="3"/>
</dbReference>
<dbReference type="STRING" id="3702.O81483"/>
<dbReference type="PaxDb" id="3702-AT2G41280.1"/>
<dbReference type="ProteomicsDB" id="239031"/>
<dbReference type="EnsemblPlants" id="AT2G41280.1">
    <property type="protein sequence ID" value="AT2G41280.1"/>
    <property type="gene ID" value="AT2G41280"/>
</dbReference>
<dbReference type="GeneID" id="818727"/>
<dbReference type="Gramene" id="AT2G41280.1">
    <property type="protein sequence ID" value="AT2G41280.1"/>
    <property type="gene ID" value="AT2G41280"/>
</dbReference>
<dbReference type="KEGG" id="ath:AT2G41280"/>
<dbReference type="Araport" id="AT2G41280"/>
<dbReference type="TAIR" id="AT2G41280">
    <property type="gene designation" value="M10"/>
</dbReference>
<dbReference type="HOGENOM" id="CLU_2213562_0_0_1"/>
<dbReference type="InParanoid" id="O81483"/>
<dbReference type="OrthoDB" id="10406741at2759"/>
<dbReference type="PhylomeDB" id="O81483"/>
<dbReference type="PRO" id="PR:O81483"/>
<dbReference type="Proteomes" id="UP000006548">
    <property type="component" value="Chromosome 2"/>
</dbReference>
<dbReference type="ExpressionAtlas" id="O81483">
    <property type="expression patterns" value="baseline and differential"/>
</dbReference>
<dbReference type="GO" id="GO:0005783">
    <property type="term" value="C:endoplasmic reticulum"/>
    <property type="evidence" value="ECO:0007005"/>
    <property type="project" value="TAIR"/>
</dbReference>
<dbReference type="GO" id="GO:0005576">
    <property type="term" value="C:extracellular region"/>
    <property type="evidence" value="ECO:0000250"/>
    <property type="project" value="TAIR"/>
</dbReference>
<dbReference type="GO" id="GO:0005773">
    <property type="term" value="C:vacuole"/>
    <property type="evidence" value="ECO:0007005"/>
    <property type="project" value="TAIR"/>
</dbReference>
<dbReference type="GO" id="GO:0010162">
    <property type="term" value="P:seed dormancy process"/>
    <property type="evidence" value="ECO:0000250"/>
    <property type="project" value="TAIR"/>
</dbReference>
<name>M10_ARATH</name>
<keyword id="KW-1185">Reference proteome</keyword>
<keyword id="KW-0732">Signal</keyword>
<organism>
    <name type="scientific">Arabidopsis thaliana</name>
    <name type="common">Mouse-ear cress</name>
    <dbReference type="NCBI Taxonomy" id="3702"/>
    <lineage>
        <taxon>Eukaryota</taxon>
        <taxon>Viridiplantae</taxon>
        <taxon>Streptophyta</taxon>
        <taxon>Embryophyta</taxon>
        <taxon>Tracheophyta</taxon>
        <taxon>Spermatophyta</taxon>
        <taxon>Magnoliopsida</taxon>
        <taxon>eudicotyledons</taxon>
        <taxon>Gunneridae</taxon>
        <taxon>Pentapetalae</taxon>
        <taxon>rosids</taxon>
        <taxon>malvids</taxon>
        <taxon>Brassicales</taxon>
        <taxon>Brassicaceae</taxon>
        <taxon>Camelineae</taxon>
        <taxon>Arabidopsis</taxon>
    </lineage>
</organism>
<reference key="1">
    <citation type="journal article" date="1999" name="Plant Mol. Biol.">
        <title>Structure, organization and expression of two closely related novel Lea (late-embryogenesis-abundant) genes in Arabidopsis thaliana.</title>
        <authorList>
            <person name="Raynal M."/>
            <person name="Guilleminot J."/>
            <person name="Gueguen C."/>
            <person name="Cooke R."/>
            <person name="Delseny M."/>
            <person name="Gruber V."/>
        </authorList>
    </citation>
    <scope>NUCLEOTIDE SEQUENCE [GENOMIC DNA]</scope>
    <scope>FUNCTION</scope>
    <scope>DEVELOPMENTAL STAGE</scope>
    <source>
        <strain>cv. Columbia</strain>
    </source>
</reference>
<reference key="2">
    <citation type="journal article" date="1999" name="Nature">
        <title>Sequence and analysis of chromosome 2 of the plant Arabidopsis thaliana.</title>
        <authorList>
            <person name="Lin X."/>
            <person name="Kaul S."/>
            <person name="Rounsley S.D."/>
            <person name="Shea T.P."/>
            <person name="Benito M.-I."/>
            <person name="Town C.D."/>
            <person name="Fujii C.Y."/>
            <person name="Mason T.M."/>
            <person name="Bowman C.L."/>
            <person name="Barnstead M.E."/>
            <person name="Feldblyum T.V."/>
            <person name="Buell C.R."/>
            <person name="Ketchum K.A."/>
            <person name="Lee J.J."/>
            <person name="Ronning C.M."/>
            <person name="Koo H.L."/>
            <person name="Moffat K.S."/>
            <person name="Cronin L.A."/>
            <person name="Shen M."/>
            <person name="Pai G."/>
            <person name="Van Aken S."/>
            <person name="Umayam L."/>
            <person name="Tallon L.J."/>
            <person name="Gill J.E."/>
            <person name="Adams M.D."/>
            <person name="Carrera A.J."/>
            <person name="Creasy T.H."/>
            <person name="Goodman H.M."/>
            <person name="Somerville C.R."/>
            <person name="Copenhaver G.P."/>
            <person name="Preuss D."/>
            <person name="Nierman W.C."/>
            <person name="White O."/>
            <person name="Eisen J.A."/>
            <person name="Salzberg S.L."/>
            <person name="Fraser C.M."/>
            <person name="Venter J.C."/>
        </authorList>
    </citation>
    <scope>NUCLEOTIDE SEQUENCE [LARGE SCALE GENOMIC DNA]</scope>
    <source>
        <strain>cv. Columbia</strain>
    </source>
</reference>
<reference key="3">
    <citation type="journal article" date="2017" name="Plant J.">
        <title>Araport11: a complete reannotation of the Arabidopsis thaliana reference genome.</title>
        <authorList>
            <person name="Cheng C.Y."/>
            <person name="Krishnakumar V."/>
            <person name="Chan A.P."/>
            <person name="Thibaud-Nissen F."/>
            <person name="Schobel S."/>
            <person name="Town C.D."/>
        </authorList>
    </citation>
    <scope>GENOME REANNOTATION</scope>
    <source>
        <strain>cv. Columbia</strain>
    </source>
</reference>
<reference key="4">
    <citation type="journal article" date="2002" name="Science">
        <title>Functional annotation of a full-length Arabidopsis cDNA collection.</title>
        <authorList>
            <person name="Seki M."/>
            <person name="Narusaka M."/>
            <person name="Kamiya A."/>
            <person name="Ishida J."/>
            <person name="Satou M."/>
            <person name="Sakurai T."/>
            <person name="Nakajima M."/>
            <person name="Enju A."/>
            <person name="Akiyama K."/>
            <person name="Oono Y."/>
            <person name="Muramatsu M."/>
            <person name="Hayashizaki Y."/>
            <person name="Kawai J."/>
            <person name="Carninci P."/>
            <person name="Itoh M."/>
            <person name="Ishii Y."/>
            <person name="Arakawa T."/>
            <person name="Shibata K."/>
            <person name="Shinagawa A."/>
            <person name="Shinozaki K."/>
        </authorList>
    </citation>
    <scope>NUCLEOTIDE SEQUENCE [LARGE SCALE MRNA]</scope>
    <source>
        <strain>cv. Columbia</strain>
    </source>
</reference>
<reference key="5">
    <citation type="journal article" date="2003" name="Science">
        <title>Empirical analysis of transcriptional activity in the Arabidopsis genome.</title>
        <authorList>
            <person name="Yamada K."/>
            <person name="Lim J."/>
            <person name="Dale J.M."/>
            <person name="Chen H."/>
            <person name="Shinn P."/>
            <person name="Palm C.J."/>
            <person name="Southwick A.M."/>
            <person name="Wu H.C."/>
            <person name="Kim C.J."/>
            <person name="Nguyen M."/>
            <person name="Pham P.K."/>
            <person name="Cheuk R.F."/>
            <person name="Karlin-Newmann G."/>
            <person name="Liu S.X."/>
            <person name="Lam B."/>
            <person name="Sakano H."/>
            <person name="Wu T."/>
            <person name="Yu G."/>
            <person name="Miranda M."/>
            <person name="Quach H.L."/>
            <person name="Tripp M."/>
            <person name="Chang C.H."/>
            <person name="Lee J.M."/>
            <person name="Toriumi M.J."/>
            <person name="Chan M.M."/>
            <person name="Tang C.C."/>
            <person name="Onodera C.S."/>
            <person name="Deng J.M."/>
            <person name="Akiyama K."/>
            <person name="Ansari Y."/>
            <person name="Arakawa T."/>
            <person name="Banh J."/>
            <person name="Banno F."/>
            <person name="Bowser L."/>
            <person name="Brooks S.Y."/>
            <person name="Carninci P."/>
            <person name="Chao Q."/>
            <person name="Choy N."/>
            <person name="Enju A."/>
            <person name="Goldsmith A.D."/>
            <person name="Gurjal M."/>
            <person name="Hansen N.F."/>
            <person name="Hayashizaki Y."/>
            <person name="Johnson-Hopson C."/>
            <person name="Hsuan V.W."/>
            <person name="Iida K."/>
            <person name="Karnes M."/>
            <person name="Khan S."/>
            <person name="Koesema E."/>
            <person name="Ishida J."/>
            <person name="Jiang P.X."/>
            <person name="Jones T."/>
            <person name="Kawai J."/>
            <person name="Kamiya A."/>
            <person name="Meyers C."/>
            <person name="Nakajima M."/>
            <person name="Narusaka M."/>
            <person name="Seki M."/>
            <person name="Sakurai T."/>
            <person name="Satou M."/>
            <person name="Tamse R."/>
            <person name="Vaysberg M."/>
            <person name="Wallender E.K."/>
            <person name="Wong C."/>
            <person name="Yamamura Y."/>
            <person name="Yuan S."/>
            <person name="Shinozaki K."/>
            <person name="Davis R.W."/>
            <person name="Theologis A."/>
            <person name="Ecker J.R."/>
        </authorList>
    </citation>
    <scope>NUCLEOTIDE SEQUENCE [LARGE SCALE MRNA]</scope>
    <source>
        <strain>cv. Columbia</strain>
    </source>
</reference>
<proteinExistence type="evidence at transcript level"/>
<evidence type="ECO:0000255" key="1"/>
<evidence type="ECO:0000269" key="2">
    <source>
    </source>
</evidence>
<evidence type="ECO:0000303" key="3">
    <source>
    </source>
</evidence>
<evidence type="ECO:0000305" key="4"/>
<evidence type="ECO:0000305" key="5">
    <source>
    </source>
</evidence>
<evidence type="ECO:0000312" key="6">
    <source>
        <dbReference type="Araport" id="AT2G41280"/>
    </source>
</evidence>
<accession>O81483</accession>
<accession>Q8GXZ9</accession>
<feature type="signal peptide" evidence="1">
    <location>
        <begin position="1"/>
        <end position="19"/>
    </location>
</feature>
<feature type="chain" id="PRO_5009340957" description="Late embryogenesis abundant protein M10">
    <location>
        <begin position="20"/>
        <end position="107"/>
    </location>
</feature>
<feature type="sequence conflict" description="In Ref. 4; BAC42584 and 5; AAO42941." evidence="4" ref="4 5">
    <original>D</original>
    <variation>G</variation>
    <location>
        <position position="43"/>
    </location>
</feature>
<protein>
    <recommendedName>
        <fullName evidence="3">Late embryogenesis abundant protein M10</fullName>
        <shortName evidence="3">AtM10</shortName>
    </recommendedName>
</protein>
<comment type="function">
    <text evidence="5">May be involved in the acquisition of desiccation tolerance during late phase of embryogenesis.</text>
</comment>
<comment type="developmental stage">
    <text evidence="2">Expressed exclusively in seeds from late embryogenesis until 1 day after imbibition.</text>
</comment>
<gene>
    <name evidence="3" type="primary">M10</name>
    <name evidence="6" type="ordered locus">At2g41280</name>
</gene>